<evidence type="ECO:0000250" key="1">
    <source>
        <dbReference type="UniProtKB" id="O54921"/>
    </source>
</evidence>
<evidence type="ECO:0000250" key="2">
    <source>
        <dbReference type="UniProtKB" id="Q62825"/>
    </source>
</evidence>
<evidence type="ECO:0000250" key="3">
    <source>
        <dbReference type="UniProtKB" id="Q6KAR6"/>
    </source>
</evidence>
<evidence type="ECO:0000269" key="4">
    <source>
    </source>
</evidence>
<evidence type="ECO:0000269" key="5">
    <source>
    </source>
</evidence>
<evidence type="ECO:0000269" key="6">
    <source>
    </source>
</evidence>
<evidence type="ECO:0000305" key="7"/>
<evidence type="ECO:0000305" key="8">
    <source>
    </source>
</evidence>
<evidence type="ECO:0007744" key="9">
    <source>
    </source>
</evidence>
<feature type="chain" id="PRO_0000118925" description="Exocyst complex component 3">
    <location>
        <begin position="1"/>
        <end position="745"/>
    </location>
</feature>
<feature type="modified residue" description="N6-acetyllysine" evidence="9">
    <location>
        <position position="28"/>
    </location>
</feature>
<comment type="function">
    <text>Component of the exocyst complex involved in the docking of exocytic vesicles with fusion sites on the plasma membrane.</text>
</comment>
<comment type="subunit">
    <text evidence="1 2 3 4">The exocyst complex is composed of EXOC1, EXOC2, EXOC3, EXOC4, EXOC5, EXOC6, EXOC7 and EXOC8 (By similarity). Interacts with EXOC3L1 (By similarity). Interacts with BIRC6/bruce. Interacts with MYRIP (By similarity). Interacts with SLC6A9 (By similarity).</text>
</comment>
<comment type="interaction">
    <interactant intactId="EBI-1052278">
        <id>O60645</id>
    </interactant>
    <interactant intactId="EBI-5661036">
        <id>A1L4K1</id>
        <label>FSD2</label>
    </interactant>
    <organismsDiffer>false</organismsDiffer>
    <experiments>3</experiments>
</comment>
<comment type="interaction">
    <interactant intactId="EBI-1052278">
        <id>O60645</id>
    </interactant>
    <interactant intactId="EBI-2548508">
        <id>Q96IK5</id>
        <label>GMCL1</label>
    </interactant>
    <organismsDiffer>false</organismsDiffer>
    <experiments>3</experiments>
</comment>
<comment type="interaction">
    <interactant intactId="EBI-1052278">
        <id>O60645</id>
    </interactant>
    <interactant intactId="EBI-721802">
        <id>Q9BZL4</id>
        <label>PPP1R12C</label>
    </interactant>
    <organismsDiffer>false</organismsDiffer>
    <experiments>3</experiments>
</comment>
<comment type="subcellular location">
    <subcellularLocation>
        <location evidence="1">Cytoplasm</location>
    </subcellularLocation>
    <subcellularLocation>
        <location evidence="1">Cytoplasm</location>
        <location evidence="1">Perinuclear region</location>
    </subcellularLocation>
    <subcellularLocation>
        <location evidence="1">Cell projection</location>
        <location evidence="1">Growth cone</location>
    </subcellularLocation>
    <subcellularLocation>
        <location evidence="5">Midbody</location>
    </subcellularLocation>
    <subcellularLocation>
        <location evidence="8">Golgi apparatus</location>
    </subcellularLocation>
    <subcellularLocation>
        <location evidence="2">Cell projection</location>
        <location evidence="2">Neuron projection</location>
    </subcellularLocation>
    <text evidence="1 5">Perinuclear in undifferentiated cells. Redistributes to growing neurites and growth cones during neuronal differentiation (By similarity). During mitosis, early recruitment to the midbody requires RALA, but not RALB, and EXOC2. In late stages of cytokinesis, localization to the midbody is RALB-dependent (PubMed:18756269).</text>
</comment>
<comment type="tissue specificity">
    <text evidence="6">Expressed in epididymis (at protein level).</text>
</comment>
<comment type="similarity">
    <text evidence="7">Belongs to the SEC6 family.</text>
</comment>
<comment type="sequence caution" evidence="7">
    <conflict type="miscellaneous discrepancy">
        <sequence resource="EMBL-CDS" id="BAB84912"/>
    </conflict>
    <text>Probable cloning artifact.</text>
</comment>
<reference key="1">
    <citation type="journal article" date="2010" name="Mol. Cell. Proteomics">
        <title>Systematic mapping and functional analysis of a family of human epididymal secretory sperm-located proteins.</title>
        <authorList>
            <person name="Li J."/>
            <person name="Liu F."/>
            <person name="Wang H."/>
            <person name="Liu X."/>
            <person name="Liu J."/>
            <person name="Li N."/>
            <person name="Wan F."/>
            <person name="Wang W."/>
            <person name="Zhang C."/>
            <person name="Jin S."/>
            <person name="Liu J."/>
            <person name="Zhu P."/>
            <person name="Liu Y."/>
        </authorList>
    </citation>
    <scope>NUCLEOTIDE SEQUENCE [MRNA]</scope>
    <scope>TISSUE SPECIFICITY</scope>
    <source>
        <tissue>Epididymis</tissue>
    </source>
</reference>
<reference key="2">
    <citation type="journal article" date="2003" name="DNA Res.">
        <title>Characterization of long cDNA clones from human adult spleen. II. The complete sequences of 81 cDNA clones.</title>
        <authorList>
            <person name="Jikuya H."/>
            <person name="Takano J."/>
            <person name="Kikuno R."/>
            <person name="Hirosawa M."/>
            <person name="Nagase T."/>
            <person name="Nomura N."/>
            <person name="Ohara O."/>
        </authorList>
    </citation>
    <scope>NUCLEOTIDE SEQUENCE [LARGE SCALE MRNA]</scope>
    <source>
        <tissue>Spleen</tissue>
    </source>
</reference>
<reference key="3">
    <citation type="journal article" date="2004" name="Nature">
        <title>The DNA sequence and comparative analysis of human chromosome 5.</title>
        <authorList>
            <person name="Schmutz J."/>
            <person name="Martin J."/>
            <person name="Terry A."/>
            <person name="Couronne O."/>
            <person name="Grimwood J."/>
            <person name="Lowry S."/>
            <person name="Gordon L.A."/>
            <person name="Scott D."/>
            <person name="Xie G."/>
            <person name="Huang W."/>
            <person name="Hellsten U."/>
            <person name="Tran-Gyamfi M."/>
            <person name="She X."/>
            <person name="Prabhakar S."/>
            <person name="Aerts A."/>
            <person name="Altherr M."/>
            <person name="Bajorek E."/>
            <person name="Black S."/>
            <person name="Branscomb E."/>
            <person name="Caoile C."/>
            <person name="Challacombe J.F."/>
            <person name="Chan Y.M."/>
            <person name="Denys M."/>
            <person name="Detter J.C."/>
            <person name="Escobar J."/>
            <person name="Flowers D."/>
            <person name="Fotopulos D."/>
            <person name="Glavina T."/>
            <person name="Gomez M."/>
            <person name="Gonzales E."/>
            <person name="Goodstein D."/>
            <person name="Grigoriev I."/>
            <person name="Groza M."/>
            <person name="Hammon N."/>
            <person name="Hawkins T."/>
            <person name="Haydu L."/>
            <person name="Israni S."/>
            <person name="Jett J."/>
            <person name="Kadner K."/>
            <person name="Kimball H."/>
            <person name="Kobayashi A."/>
            <person name="Lopez F."/>
            <person name="Lou Y."/>
            <person name="Martinez D."/>
            <person name="Medina C."/>
            <person name="Morgan J."/>
            <person name="Nandkeshwar R."/>
            <person name="Noonan J.P."/>
            <person name="Pitluck S."/>
            <person name="Pollard M."/>
            <person name="Predki P."/>
            <person name="Priest J."/>
            <person name="Ramirez L."/>
            <person name="Retterer J."/>
            <person name="Rodriguez A."/>
            <person name="Rogers S."/>
            <person name="Salamov A."/>
            <person name="Salazar A."/>
            <person name="Thayer N."/>
            <person name="Tice H."/>
            <person name="Tsai M."/>
            <person name="Ustaszewska A."/>
            <person name="Vo N."/>
            <person name="Wheeler J."/>
            <person name="Wu K."/>
            <person name="Yang J."/>
            <person name="Dickson M."/>
            <person name="Cheng J.-F."/>
            <person name="Eichler E.E."/>
            <person name="Olsen A."/>
            <person name="Pennacchio L.A."/>
            <person name="Rokhsar D.S."/>
            <person name="Richardson P."/>
            <person name="Lucas S.M."/>
            <person name="Myers R.M."/>
            <person name="Rubin E.M."/>
        </authorList>
    </citation>
    <scope>NUCLEOTIDE SEQUENCE [LARGE SCALE GENOMIC DNA]</scope>
</reference>
<reference key="4">
    <citation type="submission" date="2005-07" db="EMBL/GenBank/DDBJ databases">
        <authorList>
            <person name="Mural R.J."/>
            <person name="Istrail S."/>
            <person name="Sutton G.G."/>
            <person name="Florea L."/>
            <person name="Halpern A.L."/>
            <person name="Mobarry C.M."/>
            <person name="Lippert R."/>
            <person name="Walenz B."/>
            <person name="Shatkay H."/>
            <person name="Dew I."/>
            <person name="Miller J.R."/>
            <person name="Flanigan M.J."/>
            <person name="Edwards N.J."/>
            <person name="Bolanos R."/>
            <person name="Fasulo D."/>
            <person name="Halldorsson B.V."/>
            <person name="Hannenhalli S."/>
            <person name="Turner R."/>
            <person name="Yooseph S."/>
            <person name="Lu F."/>
            <person name="Nusskern D.R."/>
            <person name="Shue B.C."/>
            <person name="Zheng X.H."/>
            <person name="Zhong F."/>
            <person name="Delcher A.L."/>
            <person name="Huson D.H."/>
            <person name="Kravitz S.A."/>
            <person name="Mouchard L."/>
            <person name="Reinert K."/>
            <person name="Remington K.A."/>
            <person name="Clark A.G."/>
            <person name="Waterman M.S."/>
            <person name="Eichler E.E."/>
            <person name="Adams M.D."/>
            <person name="Hunkapiller M.W."/>
            <person name="Myers E.W."/>
            <person name="Venter J.C."/>
        </authorList>
    </citation>
    <scope>NUCLEOTIDE SEQUENCE [LARGE SCALE GENOMIC DNA]</scope>
</reference>
<reference key="5">
    <citation type="journal article" date="2004" name="Genome Res.">
        <title>The status, quality, and expansion of the NIH full-length cDNA project: the Mammalian Gene Collection (MGC).</title>
        <authorList>
            <consortium name="The MGC Project Team"/>
        </authorList>
    </citation>
    <scope>NUCLEOTIDE SEQUENCE [LARGE SCALE MRNA]</scope>
    <source>
        <tissue>Colon</tissue>
        <tissue>Lung</tissue>
        <tissue>Ovary</tissue>
    </source>
</reference>
<reference key="6">
    <citation type="submission" date="1998-03" db="EMBL/GenBank/DDBJ databases">
        <authorList>
            <person name="Yu W."/>
            <person name="Gibbs R.A."/>
        </authorList>
    </citation>
    <scope>NUCLEOTIDE SEQUENCE [LARGE SCALE MRNA] OF 275-745</scope>
    <source>
        <tissue>Brain</tissue>
    </source>
</reference>
<reference key="7">
    <citation type="journal article" date="2008" name="Cell">
        <title>Final stages of cytokinesis and midbody ring formation are controlled by BRUCE.</title>
        <authorList>
            <person name="Pohl C."/>
            <person name="Jentsch S."/>
        </authorList>
    </citation>
    <scope>INTERACTION WITH BIRC6</scope>
</reference>
<reference key="8">
    <citation type="journal article" date="2008" name="EMBO J.">
        <title>Distinct roles of RalA and RalB in the progression of cytokinesis are supported by distinct RalGEFs.</title>
        <authorList>
            <person name="Cascone I."/>
            <person name="Selimoglu R."/>
            <person name="Ozdemir C."/>
            <person name="Del Nery E."/>
            <person name="Yeaman C."/>
            <person name="White M."/>
            <person name="Camonis J."/>
        </authorList>
    </citation>
    <scope>SUBCELLULAR LOCATION</scope>
</reference>
<reference key="9">
    <citation type="journal article" date="2009" name="Science">
        <title>Lysine acetylation targets protein complexes and co-regulates major cellular functions.</title>
        <authorList>
            <person name="Choudhary C."/>
            <person name="Kumar C."/>
            <person name="Gnad F."/>
            <person name="Nielsen M.L."/>
            <person name="Rehman M."/>
            <person name="Walther T.C."/>
            <person name="Olsen J.V."/>
            <person name="Mann M."/>
        </authorList>
    </citation>
    <scope>ACETYLATION [LARGE SCALE ANALYSIS] AT LYS-28</scope>
    <scope>IDENTIFICATION BY MASS SPECTROMETRY [LARGE SCALE ANALYSIS]</scope>
</reference>
<reference key="10">
    <citation type="journal article" date="2011" name="BMC Syst. Biol.">
        <title>Initial characterization of the human central proteome.</title>
        <authorList>
            <person name="Burkard T.R."/>
            <person name="Planyavsky M."/>
            <person name="Kaupe I."/>
            <person name="Breitwieser F.P."/>
            <person name="Buerckstuemmer T."/>
            <person name="Bennett K.L."/>
            <person name="Superti-Furga G."/>
            <person name="Colinge J."/>
        </authorList>
    </citation>
    <scope>IDENTIFICATION BY MASS SPECTROMETRY [LARGE SCALE ANALYSIS]</scope>
</reference>
<reference key="11">
    <citation type="journal article" date="2015" name="Proteomics">
        <title>N-terminome analysis of the human mitochondrial proteome.</title>
        <authorList>
            <person name="Vaca Jacome A.S."/>
            <person name="Rabilloud T."/>
            <person name="Schaeffer-Reiss C."/>
            <person name="Rompais M."/>
            <person name="Ayoub D."/>
            <person name="Lane L."/>
            <person name="Bairoch A."/>
            <person name="Van Dorsselaer A."/>
            <person name="Carapito C."/>
        </authorList>
    </citation>
    <scope>IDENTIFICATION BY MASS SPECTROMETRY [LARGE SCALE ANALYSIS]</scope>
</reference>
<name>EXOC3_HUMAN</name>
<protein>
    <recommendedName>
        <fullName>Exocyst complex component 3</fullName>
    </recommendedName>
    <alternativeName>
        <fullName>Exocyst complex component Sec6</fullName>
    </alternativeName>
</protein>
<gene>
    <name type="primary">EXOC3</name>
    <name type="synonym">SEC6</name>
    <name type="synonym">SEC6L1</name>
</gene>
<sequence>MKETDREAVATAVQRVAGMLQRPDQLDKVEQYRRREARKKASVEARLKAAIQSQLDGVRTGLSQLHNALNDVKDIQQSLADVSKDWRQSINTIESLKDVKDAVVQHSQLAAAVENLKNIFSVPEIVRETQDLIEQGALLQAHRKLMDLECSRDGLMYEQYRMDSGNTRDMTLIHGYFGSTQGLSDELAKQLWMVLQRSLVTVRRDPTLLVSVVRIIEREEKIDRRILDRKKQTGFVPPGRPKNWKEKMFTILERTVTTRIEGTQADTRESDKMWLVRHLEIIRKYVLDDLIVAKNLMVQCFPPHYEIFKNLLNMYHQALSTRMQDLASEDLEANEIVSLLTWVLNTYTSTEMMRNVELAPEVDVGTLEPLLSPHVVSELLDTYMSTLTSNIIAWLRKALETDKKDWVKETEPEADQDGYYQTTLPAIVFQMFEQNLQVAAQISEDLKTKVLVLCLQQMNSFLSRYKDEAQLYKEEHLRNRQHPHCYVQYMIAIINNCQTFKESIVSLKRKYLKNEVEEGVSPSQPSMDGILDAIAKEGCSGLLEEVFLDLEQHLNELMTKKWLLGSNAVDIICVTVEDYFNDFAKIKKPYKKRMTAEAHRRVVVEYLRAVMQKRISFRSPEERKEGAEKMVREAEQLRFLFRKLASGFGEDVDGYCDTIVAVAEVIKLTDPSLLYLEVSTLVSKYPDIRDDHIGALLAVRGDASRDMKQTIMETLEQGPAQASPSYVPLFKDIVVPSLNVAKLLK</sequence>
<organism>
    <name type="scientific">Homo sapiens</name>
    <name type="common">Human</name>
    <dbReference type="NCBI Taxonomy" id="9606"/>
    <lineage>
        <taxon>Eukaryota</taxon>
        <taxon>Metazoa</taxon>
        <taxon>Chordata</taxon>
        <taxon>Craniata</taxon>
        <taxon>Vertebrata</taxon>
        <taxon>Euteleostomi</taxon>
        <taxon>Mammalia</taxon>
        <taxon>Eutheria</taxon>
        <taxon>Euarchontoglires</taxon>
        <taxon>Primates</taxon>
        <taxon>Haplorrhini</taxon>
        <taxon>Catarrhini</taxon>
        <taxon>Hominidae</taxon>
        <taxon>Homo</taxon>
    </lineage>
</organism>
<keyword id="KW-0007">Acetylation</keyword>
<keyword id="KW-0966">Cell projection</keyword>
<keyword id="KW-0963">Cytoplasm</keyword>
<keyword id="KW-0268">Exocytosis</keyword>
<keyword id="KW-0333">Golgi apparatus</keyword>
<keyword id="KW-0653">Protein transport</keyword>
<keyword id="KW-1267">Proteomics identification</keyword>
<keyword id="KW-1185">Reference proteome</keyword>
<keyword id="KW-0813">Transport</keyword>
<proteinExistence type="evidence at protein level"/>
<dbReference type="EMBL" id="GU727644">
    <property type="protein sequence ID" value="ADU87645.1"/>
    <property type="molecule type" value="mRNA"/>
</dbReference>
<dbReference type="EMBL" id="AK074086">
    <property type="protein sequence ID" value="BAB84912.1"/>
    <property type="status" value="ALT_SEQ"/>
    <property type="molecule type" value="mRNA"/>
</dbReference>
<dbReference type="EMBL" id="AC010442">
    <property type="status" value="NOT_ANNOTATED_CDS"/>
    <property type="molecule type" value="Genomic_DNA"/>
</dbReference>
<dbReference type="EMBL" id="CH471235">
    <property type="protein sequence ID" value="EAW51000.1"/>
    <property type="molecule type" value="Genomic_DNA"/>
</dbReference>
<dbReference type="EMBL" id="BC001511">
    <property type="protein sequence ID" value="AAH01511.2"/>
    <property type="molecule type" value="mRNA"/>
</dbReference>
<dbReference type="EMBL" id="BC019304">
    <property type="protein sequence ID" value="AAH19304.1"/>
    <property type="molecule type" value="mRNA"/>
</dbReference>
<dbReference type="EMBL" id="BC064569">
    <property type="protein sequence ID" value="AAH64569.1"/>
    <property type="molecule type" value="mRNA"/>
</dbReference>
<dbReference type="EMBL" id="AF055006">
    <property type="protein sequence ID" value="AAC09358.1"/>
    <property type="molecule type" value="mRNA"/>
</dbReference>
<dbReference type="CCDS" id="CCDS54830.1"/>
<dbReference type="RefSeq" id="NP_009208.2">
    <property type="nucleotide sequence ID" value="NM_007277.4"/>
</dbReference>
<dbReference type="RefSeq" id="XP_016864492.1">
    <property type="nucleotide sequence ID" value="XM_017009003.1"/>
</dbReference>
<dbReference type="RefSeq" id="XP_016864493.1">
    <property type="nucleotide sequence ID" value="XM_017009004.1"/>
</dbReference>
<dbReference type="SMR" id="O60645"/>
<dbReference type="BioGRID" id="116464">
    <property type="interactions" value="155"/>
</dbReference>
<dbReference type="ComplexPortal" id="CPX-4943">
    <property type="entry name" value="Exocyst, EXOC6 variant"/>
</dbReference>
<dbReference type="ComplexPortal" id="CPX-4944">
    <property type="entry name" value="Exocyst, EXOC6B variant"/>
</dbReference>
<dbReference type="CORUM" id="O60645"/>
<dbReference type="FunCoup" id="O60645">
    <property type="interactions" value="2312"/>
</dbReference>
<dbReference type="IntAct" id="O60645">
    <property type="interactions" value="77"/>
</dbReference>
<dbReference type="MINT" id="O60645"/>
<dbReference type="STRING" id="9606.ENSP00000425587"/>
<dbReference type="TCDB" id="1.F.2.1.2">
    <property type="family name" value="the octameric exocyst (exocyst) family"/>
</dbReference>
<dbReference type="iPTMnet" id="O60645"/>
<dbReference type="PhosphoSitePlus" id="O60645"/>
<dbReference type="BioMuta" id="EXOC3"/>
<dbReference type="jPOST" id="O60645"/>
<dbReference type="MassIVE" id="O60645"/>
<dbReference type="PaxDb" id="9606-ENSP00000425587"/>
<dbReference type="PeptideAtlas" id="O60645"/>
<dbReference type="ProteomicsDB" id="66896"/>
<dbReference type="Pumba" id="O60645"/>
<dbReference type="Antibodypedia" id="22230">
    <property type="antibodies" value="147 antibodies from 27 providers"/>
</dbReference>
<dbReference type="DNASU" id="11336"/>
<dbReference type="Ensembl" id="ENST00000315013.9">
    <property type="protein sequence ID" value="ENSP00000323377.5"/>
    <property type="gene ID" value="ENSG00000180104.16"/>
</dbReference>
<dbReference type="Ensembl" id="ENST00000512944.6">
    <property type="protein sequence ID" value="ENSP00000425587.1"/>
    <property type="gene ID" value="ENSG00000180104.16"/>
</dbReference>
<dbReference type="GeneID" id="11336"/>
<dbReference type="KEGG" id="hsa:11336"/>
<dbReference type="MANE-Select" id="ENST00000512944.6">
    <property type="protein sequence ID" value="ENSP00000425587.1"/>
    <property type="RefSeq nucleotide sequence ID" value="NM_007277.5"/>
    <property type="RefSeq protein sequence ID" value="NP_009208.2"/>
</dbReference>
<dbReference type="UCSC" id="uc003jba.4">
    <property type="organism name" value="human"/>
</dbReference>
<dbReference type="AGR" id="HGNC:30378"/>
<dbReference type="CTD" id="11336"/>
<dbReference type="DisGeNET" id="11336"/>
<dbReference type="GeneCards" id="EXOC3"/>
<dbReference type="HGNC" id="HGNC:30378">
    <property type="gene designation" value="EXOC3"/>
</dbReference>
<dbReference type="HPA" id="ENSG00000180104">
    <property type="expression patterns" value="Low tissue specificity"/>
</dbReference>
<dbReference type="MIM" id="608186">
    <property type="type" value="gene"/>
</dbReference>
<dbReference type="neXtProt" id="NX_O60645"/>
<dbReference type="OpenTargets" id="ENSG00000180104"/>
<dbReference type="PharmGKB" id="PA134869816"/>
<dbReference type="VEuPathDB" id="HostDB:ENSG00000180104"/>
<dbReference type="eggNOG" id="KOG2286">
    <property type="taxonomic scope" value="Eukaryota"/>
</dbReference>
<dbReference type="GeneTree" id="ENSGT01030000234613"/>
<dbReference type="HOGENOM" id="CLU_016260_1_0_1"/>
<dbReference type="InParanoid" id="O60645"/>
<dbReference type="OMA" id="MNIGPKT"/>
<dbReference type="OrthoDB" id="10047020at2759"/>
<dbReference type="PAN-GO" id="O60645">
    <property type="GO annotations" value="4 GO annotations based on evolutionary models"/>
</dbReference>
<dbReference type="PhylomeDB" id="O60645"/>
<dbReference type="TreeFam" id="TF314979"/>
<dbReference type="PathwayCommons" id="O60645"/>
<dbReference type="Reactome" id="R-HSA-1445148">
    <property type="pathway name" value="Translocation of SLC2A4 (GLUT4) to the plasma membrane"/>
</dbReference>
<dbReference type="Reactome" id="R-HSA-264876">
    <property type="pathway name" value="Insulin processing"/>
</dbReference>
<dbReference type="Reactome" id="R-HSA-5620916">
    <property type="pathway name" value="VxPx cargo-targeting to cilium"/>
</dbReference>
<dbReference type="SignaLink" id="O60645"/>
<dbReference type="SIGNOR" id="O60645"/>
<dbReference type="BioGRID-ORCS" id="11336">
    <property type="hits" value="574 hits in 1166 CRISPR screens"/>
</dbReference>
<dbReference type="CD-CODE" id="FB4E32DD">
    <property type="entry name" value="Presynaptic clusters and postsynaptic densities"/>
</dbReference>
<dbReference type="ChiTaRS" id="EXOC3">
    <property type="organism name" value="human"/>
</dbReference>
<dbReference type="GeneWiki" id="EXOC3"/>
<dbReference type="GenomeRNAi" id="11336"/>
<dbReference type="Pharos" id="O60645">
    <property type="development level" value="Tbio"/>
</dbReference>
<dbReference type="PRO" id="PR:O60645"/>
<dbReference type="Proteomes" id="UP000005640">
    <property type="component" value="Chromosome 5"/>
</dbReference>
<dbReference type="RNAct" id="O60645">
    <property type="molecule type" value="protein"/>
</dbReference>
<dbReference type="Bgee" id="ENSG00000180104">
    <property type="expression patterns" value="Expressed in mucosa of transverse colon and 202 other cell types or tissues"/>
</dbReference>
<dbReference type="ExpressionAtlas" id="O60645">
    <property type="expression patterns" value="baseline and differential"/>
</dbReference>
<dbReference type="GO" id="GO:0005829">
    <property type="term" value="C:cytosol"/>
    <property type="evidence" value="ECO:0000304"/>
    <property type="project" value="Reactome"/>
</dbReference>
<dbReference type="GO" id="GO:0000145">
    <property type="term" value="C:exocyst"/>
    <property type="evidence" value="ECO:0000318"/>
    <property type="project" value="GO_Central"/>
</dbReference>
<dbReference type="GO" id="GO:0005794">
    <property type="term" value="C:Golgi apparatus"/>
    <property type="evidence" value="ECO:0007669"/>
    <property type="project" value="UniProtKB-SubCell"/>
</dbReference>
<dbReference type="GO" id="GO:0030426">
    <property type="term" value="C:growth cone"/>
    <property type="evidence" value="ECO:0007669"/>
    <property type="project" value="UniProtKB-SubCell"/>
</dbReference>
<dbReference type="GO" id="GO:0030496">
    <property type="term" value="C:midbody"/>
    <property type="evidence" value="ECO:0007669"/>
    <property type="project" value="UniProtKB-SubCell"/>
</dbReference>
<dbReference type="GO" id="GO:0048471">
    <property type="term" value="C:perinuclear region of cytoplasm"/>
    <property type="evidence" value="ECO:0007669"/>
    <property type="project" value="UniProtKB-SubCell"/>
</dbReference>
<dbReference type="GO" id="GO:0030667">
    <property type="term" value="C:secretory granule membrane"/>
    <property type="evidence" value="ECO:0000304"/>
    <property type="project" value="Reactome"/>
</dbReference>
<dbReference type="GO" id="GO:0045296">
    <property type="term" value="F:cadherin binding"/>
    <property type="evidence" value="ECO:0007005"/>
    <property type="project" value="BHF-UCL"/>
</dbReference>
<dbReference type="GO" id="GO:0000149">
    <property type="term" value="F:SNARE binding"/>
    <property type="evidence" value="ECO:0000318"/>
    <property type="project" value="GO_Central"/>
</dbReference>
<dbReference type="GO" id="GO:0051601">
    <property type="term" value="P:exocyst localization"/>
    <property type="evidence" value="ECO:0000318"/>
    <property type="project" value="GO_Central"/>
</dbReference>
<dbReference type="GO" id="GO:0006887">
    <property type="term" value="P:exocytosis"/>
    <property type="evidence" value="ECO:0000318"/>
    <property type="project" value="GO_Central"/>
</dbReference>
<dbReference type="GO" id="GO:0090148">
    <property type="term" value="P:membrane fission"/>
    <property type="evidence" value="ECO:0000303"/>
    <property type="project" value="ComplexPortal"/>
</dbReference>
<dbReference type="GO" id="GO:0000281">
    <property type="term" value="P:mitotic cytokinesis"/>
    <property type="evidence" value="ECO:0000303"/>
    <property type="project" value="ComplexPortal"/>
</dbReference>
<dbReference type="GO" id="GO:0015031">
    <property type="term" value="P:protein transport"/>
    <property type="evidence" value="ECO:0007669"/>
    <property type="project" value="UniProtKB-KW"/>
</dbReference>
<dbReference type="GO" id="GO:0006904">
    <property type="term" value="P:vesicle docking involved in exocytosis"/>
    <property type="evidence" value="ECO:0000303"/>
    <property type="project" value="ComplexPortal"/>
</dbReference>
<dbReference type="GO" id="GO:0090522">
    <property type="term" value="P:vesicle tethering involved in exocytosis"/>
    <property type="evidence" value="ECO:0000303"/>
    <property type="project" value="ComplexPortal"/>
</dbReference>
<dbReference type="FunFam" id="1.10.357.50:FF:000004">
    <property type="entry name" value="Exocyst complex component 3"/>
    <property type="match status" value="1"/>
</dbReference>
<dbReference type="FunFam" id="1.10.357.70:FF:000001">
    <property type="entry name" value="Exocyst complex component 3"/>
    <property type="match status" value="1"/>
</dbReference>
<dbReference type="Gene3D" id="1.10.357.50">
    <property type="match status" value="1"/>
</dbReference>
<dbReference type="Gene3D" id="1.10.357.70">
    <property type="entry name" value="Exocyst complex component Sec6, C-terminal domain"/>
    <property type="match status" value="1"/>
</dbReference>
<dbReference type="InterPro" id="IPR010326">
    <property type="entry name" value="EXOC3/Sec6"/>
</dbReference>
<dbReference type="InterPro" id="IPR042532">
    <property type="entry name" value="EXOC3/Sec6_C"/>
</dbReference>
<dbReference type="PANTHER" id="PTHR21292:SF13">
    <property type="entry name" value="EXOCYST COMPLEX COMPONENT 3"/>
    <property type="match status" value="1"/>
</dbReference>
<dbReference type="PANTHER" id="PTHR21292">
    <property type="entry name" value="EXOCYST COMPLEX COMPONENT SEC6-RELATED"/>
    <property type="match status" value="1"/>
</dbReference>
<dbReference type="Pfam" id="PF06046">
    <property type="entry name" value="Sec6"/>
    <property type="match status" value="1"/>
</dbReference>
<accession>O60645</accession>
<accession>Q6P2E8</accession>
<accession>Q8TEN6</accession>
<accession>Q8WUW0</accession>
<accession>Q96DI4</accession>